<sequence length="328" mass="35978">MNQQTTNRDTGEAAATNAPANSATSTSTPDNQPTPLDAFEVLLITGMSGAGRSHAADCVEDMGWYVVDNLPPKLLIPLVDMMTTSGSGSESGVHKLAAVIDVRSSYFDELAAVLGHLDDLGVKTRILFLDASNEVLIKRYESVRRPHPLQHGNRLIDGILEERHLLEDLKERADWVIDTSSLSIHQLSTKLYEAMLGSGPTTVAVHIFSFGFKYGMPIDADFVADVRFLPNPFWVPNLRELTGHDKPVADYVLSSKGAKEFLDAYEKAIEIALEGYAQEDKHYVTIAVGCTGGQHRSVAMSEELARRLRAHGLNVTVSAREQHKRHSS</sequence>
<name>Y430_BIFLD</name>
<gene>
    <name type="ordered locus">BLD_0430</name>
</gene>
<organism>
    <name type="scientific">Bifidobacterium longum (strain DJO10A)</name>
    <dbReference type="NCBI Taxonomy" id="205913"/>
    <lineage>
        <taxon>Bacteria</taxon>
        <taxon>Bacillati</taxon>
        <taxon>Actinomycetota</taxon>
        <taxon>Actinomycetes</taxon>
        <taxon>Bifidobacteriales</taxon>
        <taxon>Bifidobacteriaceae</taxon>
        <taxon>Bifidobacterium</taxon>
    </lineage>
</organism>
<accession>B3DRV7</accession>
<keyword id="KW-0067">ATP-binding</keyword>
<keyword id="KW-0342">GTP-binding</keyword>
<keyword id="KW-0547">Nucleotide-binding</keyword>
<protein>
    <recommendedName>
        <fullName evidence="1">Nucleotide-binding protein BLD_0430</fullName>
    </recommendedName>
</protein>
<comment type="function">
    <text evidence="1">Displays ATPase and GTPase activities.</text>
</comment>
<comment type="similarity">
    <text evidence="1">Belongs to the RapZ-like family.</text>
</comment>
<feature type="chain" id="PRO_0000383218" description="Nucleotide-binding protein BLD_0430">
    <location>
        <begin position="1"/>
        <end position="328"/>
    </location>
</feature>
<feature type="region of interest" description="Disordered" evidence="2">
    <location>
        <begin position="1"/>
        <end position="35"/>
    </location>
</feature>
<feature type="compositionally biased region" description="Low complexity" evidence="2">
    <location>
        <begin position="13"/>
        <end position="29"/>
    </location>
</feature>
<feature type="binding site" evidence="1">
    <location>
        <begin position="46"/>
        <end position="53"/>
    </location>
    <ligand>
        <name>ATP</name>
        <dbReference type="ChEBI" id="CHEBI:30616"/>
    </ligand>
</feature>
<feature type="binding site" evidence="1">
    <location>
        <begin position="101"/>
        <end position="104"/>
    </location>
    <ligand>
        <name>GTP</name>
        <dbReference type="ChEBI" id="CHEBI:37565"/>
    </ligand>
</feature>
<dbReference type="EMBL" id="CP000605">
    <property type="protein sequence ID" value="ACD97876.1"/>
    <property type="molecule type" value="Genomic_DNA"/>
</dbReference>
<dbReference type="SMR" id="B3DRV7"/>
<dbReference type="KEGG" id="blj:BLD_0430"/>
<dbReference type="HOGENOM" id="CLU_059558_0_0_11"/>
<dbReference type="Proteomes" id="UP000002419">
    <property type="component" value="Chromosome"/>
</dbReference>
<dbReference type="GO" id="GO:0005524">
    <property type="term" value="F:ATP binding"/>
    <property type="evidence" value="ECO:0007669"/>
    <property type="project" value="UniProtKB-UniRule"/>
</dbReference>
<dbReference type="GO" id="GO:0005525">
    <property type="term" value="F:GTP binding"/>
    <property type="evidence" value="ECO:0007669"/>
    <property type="project" value="UniProtKB-UniRule"/>
</dbReference>
<dbReference type="Gene3D" id="3.40.50.300">
    <property type="entry name" value="P-loop containing nucleotide triphosphate hydrolases"/>
    <property type="match status" value="1"/>
</dbReference>
<dbReference type="HAMAP" id="MF_00636">
    <property type="entry name" value="RapZ_like"/>
    <property type="match status" value="1"/>
</dbReference>
<dbReference type="InterPro" id="IPR027417">
    <property type="entry name" value="P-loop_NTPase"/>
</dbReference>
<dbReference type="InterPro" id="IPR005337">
    <property type="entry name" value="RapZ-like"/>
</dbReference>
<dbReference type="InterPro" id="IPR053930">
    <property type="entry name" value="RapZ-like_N"/>
</dbReference>
<dbReference type="InterPro" id="IPR053931">
    <property type="entry name" value="RapZ_C"/>
</dbReference>
<dbReference type="NCBIfam" id="NF003828">
    <property type="entry name" value="PRK05416.1"/>
    <property type="match status" value="1"/>
</dbReference>
<dbReference type="PANTHER" id="PTHR30448">
    <property type="entry name" value="RNASE ADAPTER PROTEIN RAPZ"/>
    <property type="match status" value="1"/>
</dbReference>
<dbReference type="PANTHER" id="PTHR30448:SF0">
    <property type="entry name" value="RNASE ADAPTER PROTEIN RAPZ"/>
    <property type="match status" value="1"/>
</dbReference>
<dbReference type="Pfam" id="PF22740">
    <property type="entry name" value="PapZ_C"/>
    <property type="match status" value="1"/>
</dbReference>
<dbReference type="Pfam" id="PF03668">
    <property type="entry name" value="RapZ-like_N"/>
    <property type="match status" value="1"/>
</dbReference>
<dbReference type="PIRSF" id="PIRSF005052">
    <property type="entry name" value="P-loopkin"/>
    <property type="match status" value="1"/>
</dbReference>
<dbReference type="SUPFAM" id="SSF52540">
    <property type="entry name" value="P-loop containing nucleoside triphosphate hydrolases"/>
    <property type="match status" value="1"/>
</dbReference>
<evidence type="ECO:0000255" key="1">
    <source>
        <dbReference type="HAMAP-Rule" id="MF_00636"/>
    </source>
</evidence>
<evidence type="ECO:0000256" key="2">
    <source>
        <dbReference type="SAM" id="MobiDB-lite"/>
    </source>
</evidence>
<reference key="1">
    <citation type="journal article" date="2008" name="BMC Genomics">
        <title>Comparative genomic analysis of the gut bacterium Bifidobacterium longum reveals loci susceptible to deletion during pure culture growth.</title>
        <authorList>
            <person name="Lee J.H."/>
            <person name="Karamychev V.N."/>
            <person name="Kozyavkin S.A."/>
            <person name="Mills D."/>
            <person name="Pavlov A.R."/>
            <person name="Pavlova N.V."/>
            <person name="Polouchine N.N."/>
            <person name="Richardson P.M."/>
            <person name="Shakhova V.V."/>
            <person name="Slesarev A.I."/>
            <person name="Weimer B."/>
            <person name="O'Sullivan D.J."/>
        </authorList>
    </citation>
    <scope>NUCLEOTIDE SEQUENCE [LARGE SCALE GENOMIC DNA]</scope>
    <source>
        <strain>DJO10A</strain>
    </source>
</reference>
<proteinExistence type="inferred from homology"/>